<evidence type="ECO:0000250" key="1"/>
<evidence type="ECO:0000255" key="2">
    <source>
        <dbReference type="HAMAP-Rule" id="MF_00223"/>
    </source>
</evidence>
<protein>
    <recommendedName>
        <fullName evidence="2">GTP cyclohydrolase 1</fullName>
        <ecNumber evidence="2">3.5.4.16</ecNumber>
    </recommendedName>
    <alternativeName>
        <fullName evidence="2">GTP cyclohydrolase I</fullName>
        <shortName evidence="2">GTP-CH-I</shortName>
    </alternativeName>
</protein>
<name>GCH1_RHILO</name>
<proteinExistence type="inferred from homology"/>
<comment type="catalytic activity">
    <reaction evidence="2">
        <text>GTP + H2O = 7,8-dihydroneopterin 3'-triphosphate + formate + H(+)</text>
        <dbReference type="Rhea" id="RHEA:17473"/>
        <dbReference type="ChEBI" id="CHEBI:15377"/>
        <dbReference type="ChEBI" id="CHEBI:15378"/>
        <dbReference type="ChEBI" id="CHEBI:15740"/>
        <dbReference type="ChEBI" id="CHEBI:37565"/>
        <dbReference type="ChEBI" id="CHEBI:58462"/>
        <dbReference type="EC" id="3.5.4.16"/>
    </reaction>
</comment>
<comment type="pathway">
    <text evidence="2">Cofactor biosynthesis; 7,8-dihydroneopterin triphosphate biosynthesis; 7,8-dihydroneopterin triphosphate from GTP: step 1/1.</text>
</comment>
<comment type="subunit">
    <text evidence="1">Toroid-shaped homodecamer, composed of two pentamers of five dimers.</text>
</comment>
<comment type="similarity">
    <text evidence="2">Belongs to the GTP cyclohydrolase I family.</text>
</comment>
<reference key="1">
    <citation type="journal article" date="2000" name="DNA Res.">
        <title>Complete genome structure of the nitrogen-fixing symbiotic bacterium Mesorhizobium loti.</title>
        <authorList>
            <person name="Kaneko T."/>
            <person name="Nakamura Y."/>
            <person name="Sato S."/>
            <person name="Asamizu E."/>
            <person name="Kato T."/>
            <person name="Sasamoto S."/>
            <person name="Watanabe A."/>
            <person name="Idesawa K."/>
            <person name="Ishikawa A."/>
            <person name="Kawashima K."/>
            <person name="Kimura T."/>
            <person name="Kishida Y."/>
            <person name="Kiyokawa C."/>
            <person name="Kohara M."/>
            <person name="Matsumoto M."/>
            <person name="Matsuno A."/>
            <person name="Mochizuki Y."/>
            <person name="Nakayama S."/>
            <person name="Nakazaki N."/>
            <person name="Shimpo S."/>
            <person name="Sugimoto M."/>
            <person name="Takeuchi C."/>
            <person name="Yamada M."/>
            <person name="Tabata S."/>
        </authorList>
    </citation>
    <scope>NUCLEOTIDE SEQUENCE [LARGE SCALE GENOMIC DNA]</scope>
    <source>
        <strain>LMG 29417 / CECT 9101 / MAFF 303099</strain>
    </source>
</reference>
<sequence>MEKPVTDRPSEAEVEAAVRTLLRWTGDNPDREGLIDTPKRVAKAFREMFGGYDMCPAEELGRTFEEVAGYDDLVIVKDIHFHSHCEHHMVPIIGKAHVGYLPDGKVVGLSKIARVVDIFAHRLQTQEALTAQIAGVIQDVLNPRGVAVMIEAEHMCMAMRGIRKQGSTTLTSTFTGVFKDTPEEQVRFVTMVRGGGA</sequence>
<dbReference type="EC" id="3.5.4.16" evidence="2"/>
<dbReference type="EMBL" id="BA000012">
    <property type="protein sequence ID" value="BAB48407.1"/>
    <property type="molecule type" value="Genomic_DNA"/>
</dbReference>
<dbReference type="SMR" id="Q98LQ6"/>
<dbReference type="KEGG" id="mlo:mlr0922"/>
<dbReference type="eggNOG" id="COG0302">
    <property type="taxonomic scope" value="Bacteria"/>
</dbReference>
<dbReference type="HOGENOM" id="CLU_049768_3_1_5"/>
<dbReference type="UniPathway" id="UPA00848">
    <property type="reaction ID" value="UER00151"/>
</dbReference>
<dbReference type="Proteomes" id="UP000000552">
    <property type="component" value="Chromosome"/>
</dbReference>
<dbReference type="GO" id="GO:0005737">
    <property type="term" value="C:cytoplasm"/>
    <property type="evidence" value="ECO:0007669"/>
    <property type="project" value="TreeGrafter"/>
</dbReference>
<dbReference type="GO" id="GO:0005525">
    <property type="term" value="F:GTP binding"/>
    <property type="evidence" value="ECO:0007669"/>
    <property type="project" value="UniProtKB-KW"/>
</dbReference>
<dbReference type="GO" id="GO:0003934">
    <property type="term" value="F:GTP cyclohydrolase I activity"/>
    <property type="evidence" value="ECO:0007669"/>
    <property type="project" value="UniProtKB-UniRule"/>
</dbReference>
<dbReference type="GO" id="GO:0008270">
    <property type="term" value="F:zinc ion binding"/>
    <property type="evidence" value="ECO:0007669"/>
    <property type="project" value="UniProtKB-UniRule"/>
</dbReference>
<dbReference type="GO" id="GO:0006730">
    <property type="term" value="P:one-carbon metabolic process"/>
    <property type="evidence" value="ECO:0007669"/>
    <property type="project" value="UniProtKB-UniRule"/>
</dbReference>
<dbReference type="GO" id="GO:0006729">
    <property type="term" value="P:tetrahydrobiopterin biosynthetic process"/>
    <property type="evidence" value="ECO:0007669"/>
    <property type="project" value="TreeGrafter"/>
</dbReference>
<dbReference type="GO" id="GO:0046654">
    <property type="term" value="P:tetrahydrofolate biosynthetic process"/>
    <property type="evidence" value="ECO:0007669"/>
    <property type="project" value="UniProtKB-UniRule"/>
</dbReference>
<dbReference type="FunFam" id="1.10.286.10:FF:000001">
    <property type="entry name" value="GTP cyclohydrolase 1"/>
    <property type="match status" value="1"/>
</dbReference>
<dbReference type="FunFam" id="3.30.1130.10:FF:000001">
    <property type="entry name" value="GTP cyclohydrolase 1"/>
    <property type="match status" value="1"/>
</dbReference>
<dbReference type="Gene3D" id="1.10.286.10">
    <property type="match status" value="1"/>
</dbReference>
<dbReference type="Gene3D" id="3.30.1130.10">
    <property type="match status" value="1"/>
</dbReference>
<dbReference type="HAMAP" id="MF_00223">
    <property type="entry name" value="FolE"/>
    <property type="match status" value="1"/>
</dbReference>
<dbReference type="InterPro" id="IPR043133">
    <property type="entry name" value="GTP-CH-I_C/QueF"/>
</dbReference>
<dbReference type="InterPro" id="IPR043134">
    <property type="entry name" value="GTP-CH-I_N"/>
</dbReference>
<dbReference type="InterPro" id="IPR001474">
    <property type="entry name" value="GTP_CycHdrlase_I"/>
</dbReference>
<dbReference type="InterPro" id="IPR018234">
    <property type="entry name" value="GTP_CycHdrlase_I_CS"/>
</dbReference>
<dbReference type="InterPro" id="IPR020602">
    <property type="entry name" value="GTP_CycHdrlase_I_dom"/>
</dbReference>
<dbReference type="NCBIfam" id="TIGR00063">
    <property type="entry name" value="folE"/>
    <property type="match status" value="1"/>
</dbReference>
<dbReference type="NCBIfam" id="NF006825">
    <property type="entry name" value="PRK09347.1-2"/>
    <property type="match status" value="1"/>
</dbReference>
<dbReference type="NCBIfam" id="NF006826">
    <property type="entry name" value="PRK09347.1-3"/>
    <property type="match status" value="1"/>
</dbReference>
<dbReference type="PANTHER" id="PTHR11109:SF7">
    <property type="entry name" value="GTP CYCLOHYDROLASE 1"/>
    <property type="match status" value="1"/>
</dbReference>
<dbReference type="PANTHER" id="PTHR11109">
    <property type="entry name" value="GTP CYCLOHYDROLASE I"/>
    <property type="match status" value="1"/>
</dbReference>
<dbReference type="Pfam" id="PF01227">
    <property type="entry name" value="GTP_cyclohydroI"/>
    <property type="match status" value="1"/>
</dbReference>
<dbReference type="SUPFAM" id="SSF55620">
    <property type="entry name" value="Tetrahydrobiopterin biosynthesis enzymes-like"/>
    <property type="match status" value="1"/>
</dbReference>
<dbReference type="PROSITE" id="PS00859">
    <property type="entry name" value="GTP_CYCLOHYDROL_1_1"/>
    <property type="match status" value="1"/>
</dbReference>
<dbReference type="PROSITE" id="PS00860">
    <property type="entry name" value="GTP_CYCLOHYDROL_1_2"/>
    <property type="match status" value="1"/>
</dbReference>
<keyword id="KW-0342">GTP-binding</keyword>
<keyword id="KW-0378">Hydrolase</keyword>
<keyword id="KW-0479">Metal-binding</keyword>
<keyword id="KW-0547">Nucleotide-binding</keyword>
<keyword id="KW-0554">One-carbon metabolism</keyword>
<keyword id="KW-0862">Zinc</keyword>
<organism>
    <name type="scientific">Mesorhizobium japonicum (strain LMG 29417 / CECT 9101 / MAFF 303099)</name>
    <name type="common">Mesorhizobium loti (strain MAFF 303099)</name>
    <dbReference type="NCBI Taxonomy" id="266835"/>
    <lineage>
        <taxon>Bacteria</taxon>
        <taxon>Pseudomonadati</taxon>
        <taxon>Pseudomonadota</taxon>
        <taxon>Alphaproteobacteria</taxon>
        <taxon>Hyphomicrobiales</taxon>
        <taxon>Phyllobacteriaceae</taxon>
        <taxon>Mesorhizobium</taxon>
    </lineage>
</organism>
<accession>Q98LQ6</accession>
<gene>
    <name evidence="2" type="primary">folE</name>
    <name type="ordered locus">mlr0922</name>
</gene>
<feature type="chain" id="PRO_0000119435" description="GTP cyclohydrolase 1">
    <location>
        <begin position="1"/>
        <end position="197"/>
    </location>
</feature>
<feature type="binding site" evidence="2">
    <location>
        <position position="85"/>
    </location>
    <ligand>
        <name>Zn(2+)</name>
        <dbReference type="ChEBI" id="CHEBI:29105"/>
    </ligand>
</feature>
<feature type="binding site" evidence="2">
    <location>
        <position position="88"/>
    </location>
    <ligand>
        <name>Zn(2+)</name>
        <dbReference type="ChEBI" id="CHEBI:29105"/>
    </ligand>
</feature>
<feature type="binding site" evidence="2">
    <location>
        <position position="156"/>
    </location>
    <ligand>
        <name>Zn(2+)</name>
        <dbReference type="ChEBI" id="CHEBI:29105"/>
    </ligand>
</feature>